<reference key="1">
    <citation type="journal article" date="2003" name="Mol. Microbiol.">
        <title>Genome-based analysis of virulence genes in a non-biofilm-forming Staphylococcus epidermidis strain (ATCC 12228).</title>
        <authorList>
            <person name="Zhang Y.-Q."/>
            <person name="Ren S.-X."/>
            <person name="Li H.-L."/>
            <person name="Wang Y.-X."/>
            <person name="Fu G."/>
            <person name="Yang J."/>
            <person name="Qin Z.-Q."/>
            <person name="Miao Y.-G."/>
            <person name="Wang W.-Y."/>
            <person name="Chen R.-S."/>
            <person name="Shen Y."/>
            <person name="Chen Z."/>
            <person name="Yuan Z.-H."/>
            <person name="Zhao G.-P."/>
            <person name="Qu D."/>
            <person name="Danchin A."/>
            <person name="Wen Y.-M."/>
        </authorList>
    </citation>
    <scope>NUCLEOTIDE SEQUENCE [LARGE SCALE GENOMIC DNA]</scope>
    <source>
        <strain>ATCC 12228 / FDA PCI 1200</strain>
    </source>
</reference>
<feature type="chain" id="PRO_0000112321" description="Carbamoyl phosphate synthase small chain">
    <location>
        <begin position="1"/>
        <end position="366"/>
    </location>
</feature>
<feature type="domain" description="Glutamine amidotransferase type-1" evidence="1">
    <location>
        <begin position="173"/>
        <end position="360"/>
    </location>
</feature>
<feature type="region of interest" description="CPSase" evidence="1">
    <location>
        <begin position="1"/>
        <end position="171"/>
    </location>
</feature>
<feature type="active site" description="Nucleophile" evidence="1">
    <location>
        <position position="248"/>
    </location>
</feature>
<feature type="active site" evidence="1">
    <location>
        <position position="333"/>
    </location>
</feature>
<feature type="active site" evidence="1">
    <location>
        <position position="335"/>
    </location>
</feature>
<feature type="binding site" evidence="1">
    <location>
        <position position="47"/>
    </location>
    <ligand>
        <name>L-glutamine</name>
        <dbReference type="ChEBI" id="CHEBI:58359"/>
    </ligand>
</feature>
<feature type="binding site" evidence="1">
    <location>
        <position position="221"/>
    </location>
    <ligand>
        <name>L-glutamine</name>
        <dbReference type="ChEBI" id="CHEBI:58359"/>
    </ligand>
</feature>
<feature type="binding site" evidence="1">
    <location>
        <position position="223"/>
    </location>
    <ligand>
        <name>L-glutamine</name>
        <dbReference type="ChEBI" id="CHEBI:58359"/>
    </ligand>
</feature>
<feature type="binding site" evidence="1">
    <location>
        <position position="249"/>
    </location>
    <ligand>
        <name>L-glutamine</name>
        <dbReference type="ChEBI" id="CHEBI:58359"/>
    </ligand>
</feature>
<feature type="binding site" evidence="1">
    <location>
        <position position="252"/>
    </location>
    <ligand>
        <name>L-glutamine</name>
        <dbReference type="ChEBI" id="CHEBI:58359"/>
    </ligand>
</feature>
<feature type="binding site" evidence="1">
    <location>
        <position position="290"/>
    </location>
    <ligand>
        <name>L-glutamine</name>
        <dbReference type="ChEBI" id="CHEBI:58359"/>
    </ligand>
</feature>
<feature type="binding site" evidence="1">
    <location>
        <position position="292"/>
    </location>
    <ligand>
        <name>L-glutamine</name>
        <dbReference type="ChEBI" id="CHEBI:58359"/>
    </ligand>
</feature>
<feature type="binding site" evidence="1">
    <location>
        <position position="293"/>
    </location>
    <ligand>
        <name>L-glutamine</name>
        <dbReference type="ChEBI" id="CHEBI:58359"/>
    </ligand>
</feature>
<sequence>MLEKRYLVLEDGSYYEGYRLGSDDLSIGEIVFNTAMTGYQETISDPSYTGQIITFTYPLIGNYGINRDDFESLTPKLNGVVVKEASTHPSNFRHQKTLHETLAQYHIPGISGVDTRSITRKIRNYGVLRAGFTDNKDNIQELVEQLKTAELPRDEVQTVSTKTPYVSTGSDLSVVLLDFGKKQNIVRELNLRGCNVTVVPYDTSAEEILGMSPDGVMLSNGPGDPDEVDVALDMIRGILGKIPFFGICLGHQLFALSQGATSFKMKFGHRGANHPVKDLRTGKIDITSQNHGYSIDCDSLKNTDLEVTHIALNDGTVEGLRHKELPAFSVQYHPEARPGPSDSNYLFDEFIAMMKDFKEKERQINA</sequence>
<accession>Q8CPJ5</accession>
<comment type="function">
    <text evidence="1">Small subunit of the glutamine-dependent carbamoyl phosphate synthetase (CPSase). CPSase catalyzes the formation of carbamoyl phosphate from the ammonia moiety of glutamine, carbonate, and phosphate donated by ATP, constituting the first step of 2 biosynthetic pathways, one leading to arginine and/or urea and the other to pyrimidine nucleotides. The small subunit (glutamine amidotransferase) binds and cleaves glutamine to supply the large subunit with the substrate ammonia.</text>
</comment>
<comment type="catalytic activity">
    <reaction evidence="1">
        <text>hydrogencarbonate + L-glutamine + 2 ATP + H2O = carbamoyl phosphate + L-glutamate + 2 ADP + phosphate + 2 H(+)</text>
        <dbReference type="Rhea" id="RHEA:18633"/>
        <dbReference type="ChEBI" id="CHEBI:15377"/>
        <dbReference type="ChEBI" id="CHEBI:15378"/>
        <dbReference type="ChEBI" id="CHEBI:17544"/>
        <dbReference type="ChEBI" id="CHEBI:29985"/>
        <dbReference type="ChEBI" id="CHEBI:30616"/>
        <dbReference type="ChEBI" id="CHEBI:43474"/>
        <dbReference type="ChEBI" id="CHEBI:58228"/>
        <dbReference type="ChEBI" id="CHEBI:58359"/>
        <dbReference type="ChEBI" id="CHEBI:456216"/>
        <dbReference type="EC" id="6.3.5.5"/>
    </reaction>
</comment>
<comment type="catalytic activity">
    <molecule>Carbamoyl phosphate synthase small chain</molecule>
    <reaction evidence="1">
        <text>L-glutamine + H2O = L-glutamate + NH4(+)</text>
        <dbReference type="Rhea" id="RHEA:15889"/>
        <dbReference type="ChEBI" id="CHEBI:15377"/>
        <dbReference type="ChEBI" id="CHEBI:28938"/>
        <dbReference type="ChEBI" id="CHEBI:29985"/>
        <dbReference type="ChEBI" id="CHEBI:58359"/>
    </reaction>
</comment>
<comment type="pathway">
    <text evidence="1">Amino-acid biosynthesis; L-arginine biosynthesis; carbamoyl phosphate from bicarbonate: step 1/1.</text>
</comment>
<comment type="pathway">
    <text evidence="1">Pyrimidine metabolism; UMP biosynthesis via de novo pathway; (S)-dihydroorotate from bicarbonate: step 1/3.</text>
</comment>
<comment type="subunit">
    <text evidence="1">Composed of two chains; the small (or glutamine) chain promotes the hydrolysis of glutamine to ammonia, which is used by the large (or ammonia) chain to synthesize carbamoyl phosphate. Tetramer of heterodimers (alpha,beta)4.</text>
</comment>
<comment type="similarity">
    <text evidence="1">Belongs to the CarA family.</text>
</comment>
<keyword id="KW-0028">Amino-acid biosynthesis</keyword>
<keyword id="KW-0055">Arginine biosynthesis</keyword>
<keyword id="KW-0067">ATP-binding</keyword>
<keyword id="KW-0315">Glutamine amidotransferase</keyword>
<keyword id="KW-0436">Ligase</keyword>
<keyword id="KW-0547">Nucleotide-binding</keyword>
<keyword id="KW-0665">Pyrimidine biosynthesis</keyword>
<evidence type="ECO:0000255" key="1">
    <source>
        <dbReference type="HAMAP-Rule" id="MF_01209"/>
    </source>
</evidence>
<gene>
    <name evidence="1" type="primary">carA</name>
    <name type="ordered locus">SE_0878</name>
</gene>
<organism>
    <name type="scientific">Staphylococcus epidermidis (strain ATCC 12228 / FDA PCI 1200)</name>
    <dbReference type="NCBI Taxonomy" id="176280"/>
    <lineage>
        <taxon>Bacteria</taxon>
        <taxon>Bacillati</taxon>
        <taxon>Bacillota</taxon>
        <taxon>Bacilli</taxon>
        <taxon>Bacillales</taxon>
        <taxon>Staphylococcaceae</taxon>
        <taxon>Staphylococcus</taxon>
    </lineage>
</organism>
<name>CARA_STAES</name>
<dbReference type="EC" id="6.3.5.5" evidence="1"/>
<dbReference type="EMBL" id="AE015929">
    <property type="protein sequence ID" value="AAO04475.1"/>
    <property type="molecule type" value="Genomic_DNA"/>
</dbReference>
<dbReference type="RefSeq" id="NP_764433.1">
    <property type="nucleotide sequence ID" value="NC_004461.1"/>
</dbReference>
<dbReference type="RefSeq" id="WP_001830071.1">
    <property type="nucleotide sequence ID" value="NZ_WBME01000063.1"/>
</dbReference>
<dbReference type="SMR" id="Q8CPJ5"/>
<dbReference type="MEROPS" id="C26.963"/>
<dbReference type="KEGG" id="sep:SE_0878"/>
<dbReference type="PATRIC" id="fig|176280.10.peg.850"/>
<dbReference type="eggNOG" id="COG0505">
    <property type="taxonomic scope" value="Bacteria"/>
</dbReference>
<dbReference type="HOGENOM" id="CLU_035901_2_1_9"/>
<dbReference type="OrthoDB" id="9804328at2"/>
<dbReference type="UniPathway" id="UPA00068">
    <property type="reaction ID" value="UER00171"/>
</dbReference>
<dbReference type="UniPathway" id="UPA00070">
    <property type="reaction ID" value="UER00115"/>
</dbReference>
<dbReference type="Proteomes" id="UP000001411">
    <property type="component" value="Chromosome"/>
</dbReference>
<dbReference type="GO" id="GO:0005524">
    <property type="term" value="F:ATP binding"/>
    <property type="evidence" value="ECO:0007669"/>
    <property type="project" value="UniProtKB-UniRule"/>
</dbReference>
<dbReference type="GO" id="GO:0004088">
    <property type="term" value="F:carbamoyl-phosphate synthase (glutamine-hydrolyzing) activity"/>
    <property type="evidence" value="ECO:0007669"/>
    <property type="project" value="UniProtKB-UniRule"/>
</dbReference>
<dbReference type="GO" id="GO:0004359">
    <property type="term" value="F:glutaminase activity"/>
    <property type="evidence" value="ECO:0007669"/>
    <property type="project" value="RHEA"/>
</dbReference>
<dbReference type="GO" id="GO:0006207">
    <property type="term" value="P:'de novo' pyrimidine nucleobase biosynthetic process"/>
    <property type="evidence" value="ECO:0007669"/>
    <property type="project" value="InterPro"/>
</dbReference>
<dbReference type="GO" id="GO:0044205">
    <property type="term" value="P:'de novo' UMP biosynthetic process"/>
    <property type="evidence" value="ECO:0007669"/>
    <property type="project" value="UniProtKB-UniRule"/>
</dbReference>
<dbReference type="GO" id="GO:0006541">
    <property type="term" value="P:glutamine metabolic process"/>
    <property type="evidence" value="ECO:0007669"/>
    <property type="project" value="InterPro"/>
</dbReference>
<dbReference type="GO" id="GO:0006526">
    <property type="term" value="P:L-arginine biosynthetic process"/>
    <property type="evidence" value="ECO:0007669"/>
    <property type="project" value="UniProtKB-UniRule"/>
</dbReference>
<dbReference type="CDD" id="cd01744">
    <property type="entry name" value="GATase1_CPSase"/>
    <property type="match status" value="1"/>
</dbReference>
<dbReference type="FunFam" id="3.40.50.880:FF:000029">
    <property type="entry name" value="Carbamoyl-phosphate synthase small chain"/>
    <property type="match status" value="1"/>
</dbReference>
<dbReference type="FunFam" id="3.50.30.20:FF:000001">
    <property type="entry name" value="Carbamoyl-phosphate synthase small chain"/>
    <property type="match status" value="1"/>
</dbReference>
<dbReference type="Gene3D" id="3.40.50.880">
    <property type="match status" value="1"/>
</dbReference>
<dbReference type="Gene3D" id="3.50.30.20">
    <property type="entry name" value="Carbamoyl-phosphate synthase small subunit, N-terminal domain"/>
    <property type="match status" value="1"/>
</dbReference>
<dbReference type="HAMAP" id="MF_01209">
    <property type="entry name" value="CPSase_S_chain"/>
    <property type="match status" value="1"/>
</dbReference>
<dbReference type="InterPro" id="IPR050472">
    <property type="entry name" value="Anth_synth/Amidotransfase"/>
</dbReference>
<dbReference type="InterPro" id="IPR006274">
    <property type="entry name" value="CarbamoylP_synth_ssu"/>
</dbReference>
<dbReference type="InterPro" id="IPR002474">
    <property type="entry name" value="CarbamoylP_synth_ssu_N"/>
</dbReference>
<dbReference type="InterPro" id="IPR036480">
    <property type="entry name" value="CarbP_synth_ssu_N_sf"/>
</dbReference>
<dbReference type="InterPro" id="IPR029062">
    <property type="entry name" value="Class_I_gatase-like"/>
</dbReference>
<dbReference type="InterPro" id="IPR035686">
    <property type="entry name" value="CPSase_GATase1"/>
</dbReference>
<dbReference type="InterPro" id="IPR017926">
    <property type="entry name" value="GATASE"/>
</dbReference>
<dbReference type="NCBIfam" id="TIGR01368">
    <property type="entry name" value="CPSaseIIsmall"/>
    <property type="match status" value="1"/>
</dbReference>
<dbReference type="NCBIfam" id="NF009475">
    <property type="entry name" value="PRK12838.1"/>
    <property type="match status" value="1"/>
</dbReference>
<dbReference type="PANTHER" id="PTHR43418:SF7">
    <property type="entry name" value="CARBAMOYL-PHOSPHATE SYNTHASE SMALL CHAIN"/>
    <property type="match status" value="1"/>
</dbReference>
<dbReference type="PANTHER" id="PTHR43418">
    <property type="entry name" value="MULTIFUNCTIONAL TRYPTOPHAN BIOSYNTHESIS PROTEIN-RELATED"/>
    <property type="match status" value="1"/>
</dbReference>
<dbReference type="Pfam" id="PF00988">
    <property type="entry name" value="CPSase_sm_chain"/>
    <property type="match status" value="1"/>
</dbReference>
<dbReference type="Pfam" id="PF00117">
    <property type="entry name" value="GATase"/>
    <property type="match status" value="1"/>
</dbReference>
<dbReference type="PRINTS" id="PR00097">
    <property type="entry name" value="ANTSNTHASEII"/>
</dbReference>
<dbReference type="PRINTS" id="PR00099">
    <property type="entry name" value="CPSGATASE"/>
</dbReference>
<dbReference type="PRINTS" id="PR00096">
    <property type="entry name" value="GATASE"/>
</dbReference>
<dbReference type="SMART" id="SM01097">
    <property type="entry name" value="CPSase_sm_chain"/>
    <property type="match status" value="1"/>
</dbReference>
<dbReference type="SUPFAM" id="SSF52021">
    <property type="entry name" value="Carbamoyl phosphate synthetase, small subunit N-terminal domain"/>
    <property type="match status" value="1"/>
</dbReference>
<dbReference type="SUPFAM" id="SSF52317">
    <property type="entry name" value="Class I glutamine amidotransferase-like"/>
    <property type="match status" value="1"/>
</dbReference>
<dbReference type="PROSITE" id="PS51273">
    <property type="entry name" value="GATASE_TYPE_1"/>
    <property type="match status" value="1"/>
</dbReference>
<protein>
    <recommendedName>
        <fullName evidence="1">Carbamoyl phosphate synthase small chain</fullName>
        <ecNumber evidence="1">6.3.5.5</ecNumber>
    </recommendedName>
    <alternativeName>
        <fullName evidence="1">Carbamoyl phosphate synthetase glutamine chain</fullName>
    </alternativeName>
</protein>
<proteinExistence type="inferred from homology"/>